<sequence>MNNFDYYRDFDDFQRRETINFFLAKFPFASKAQLDVFLEQAKTAYVKLRTSNPKNVDWNQMLVLLLKKFGPEARSEKERLKRILSLQEQLKVRLEGEINRQVQQNSELFSQLKQSESEIIQMQQLVEAKEHQIEALNKQLHAIKEANKKLIEEHESINVEELLKEYEVQCNEAIYKRDQHIQTVFEDKLALKDGEISETQSLLKTAEKEKQALKKAYKLVVNSLQKHQKLTTEIEIDFTKLDEIIATIFDETKNPKTGFTNFIKQFEKTKAKLTKKIAEITKLDHSTPTNYQQETPASQQQLDQENEPIKPSKKSNSSSLPRGTTQPKSNSINRVSKLID</sequence>
<reference key="1">
    <citation type="journal article" date="1995" name="Science">
        <title>The minimal gene complement of Mycoplasma genitalium.</title>
        <authorList>
            <person name="Fraser C.M."/>
            <person name="Gocayne J.D."/>
            <person name="White O."/>
            <person name="Adams M.D."/>
            <person name="Clayton R.A."/>
            <person name="Fleischmann R.D."/>
            <person name="Bult C.J."/>
            <person name="Kerlavage A.R."/>
            <person name="Sutton G.G."/>
            <person name="Kelley J.M."/>
            <person name="Fritchman J.L."/>
            <person name="Weidman J.F."/>
            <person name="Small K.V."/>
            <person name="Sandusky M."/>
            <person name="Fuhrmann J.L."/>
            <person name="Nguyen D.T."/>
            <person name="Utterback T.R."/>
            <person name="Saudek D.M."/>
            <person name="Phillips C.A."/>
            <person name="Merrick J.M."/>
            <person name="Tomb J.-F."/>
            <person name="Dougherty B.A."/>
            <person name="Bott K.F."/>
            <person name="Hu P.-C."/>
            <person name="Lucier T.S."/>
            <person name="Peterson S.N."/>
            <person name="Smith H.O."/>
            <person name="Hutchison C.A. III"/>
            <person name="Venter J.C."/>
        </authorList>
    </citation>
    <scope>NUCLEOTIDE SEQUENCE [LARGE SCALE GENOMIC DNA]</scope>
    <source>
        <strain>ATCC 33530 / DSM 19775 / NCTC 10195 / G37</strain>
    </source>
</reference>
<reference key="2">
    <citation type="journal article" date="1993" name="J. Bacteriol.">
        <title>A survey of the Mycoplasma genitalium genome by using random sequencing.</title>
        <authorList>
            <person name="Peterson S.N."/>
            <person name="Hu P.-C."/>
            <person name="Bott K.F."/>
            <person name="Hutchison C.A. III"/>
        </authorList>
    </citation>
    <scope>NUCLEOTIDE SEQUENCE [GENOMIC DNA] OF 1-79</scope>
    <source>
        <strain>ATCC 33530 / DSM 19775 / NCTC 10195 / G37</strain>
    </source>
</reference>
<feature type="chain" id="PRO_0000210498" description="Uncharacterized protein MG269">
    <location>
        <begin position="1"/>
        <end position="340"/>
    </location>
</feature>
<feature type="region of interest" description="Disordered" evidence="1">
    <location>
        <begin position="284"/>
        <end position="340"/>
    </location>
</feature>
<feature type="compositionally biased region" description="Polar residues" evidence="1">
    <location>
        <begin position="286"/>
        <end position="303"/>
    </location>
</feature>
<feature type="compositionally biased region" description="Polar residues" evidence="1">
    <location>
        <begin position="320"/>
        <end position="334"/>
    </location>
</feature>
<protein>
    <recommendedName>
        <fullName>Uncharacterized protein MG269</fullName>
    </recommendedName>
</protein>
<dbReference type="EMBL" id="L43967">
    <property type="protein sequence ID" value="AAC71491.1"/>
    <property type="molecule type" value="Genomic_DNA"/>
</dbReference>
<dbReference type="EMBL" id="U02215">
    <property type="protein sequence ID" value="AAD12510.1"/>
    <property type="status" value="ALT_INIT"/>
    <property type="molecule type" value="Genomic_DNA"/>
</dbReference>
<dbReference type="PIR" id="G64229">
    <property type="entry name" value="G64229"/>
</dbReference>
<dbReference type="RefSeq" id="WP_009885900.1">
    <property type="nucleotide sequence ID" value="NC_000908.2"/>
</dbReference>
<dbReference type="SMR" id="Q49407"/>
<dbReference type="STRING" id="243273.MG_269"/>
<dbReference type="GeneID" id="88282424"/>
<dbReference type="KEGG" id="mge:MG_269"/>
<dbReference type="eggNOG" id="COG1196">
    <property type="taxonomic scope" value="Bacteria"/>
</dbReference>
<dbReference type="HOGENOM" id="CLU_815895_0_0_14"/>
<dbReference type="InParanoid" id="Q49407"/>
<dbReference type="OrthoDB" id="9978147at2"/>
<dbReference type="BioCyc" id="MGEN243273:G1GJ2-326-MONOMER"/>
<dbReference type="Proteomes" id="UP000000807">
    <property type="component" value="Chromosome"/>
</dbReference>
<evidence type="ECO:0000256" key="1">
    <source>
        <dbReference type="SAM" id="MobiDB-lite"/>
    </source>
</evidence>
<evidence type="ECO:0000305" key="2"/>
<accession>Q49407</accession>
<accession>Q49328</accession>
<gene>
    <name type="ordered locus">MG269</name>
</gene>
<name>Y269_MYCGE</name>
<proteinExistence type="predicted"/>
<organism>
    <name type="scientific">Mycoplasma genitalium (strain ATCC 33530 / DSM 19775 / NCTC 10195 / G37)</name>
    <name type="common">Mycoplasmoides genitalium</name>
    <dbReference type="NCBI Taxonomy" id="243273"/>
    <lineage>
        <taxon>Bacteria</taxon>
        <taxon>Bacillati</taxon>
        <taxon>Mycoplasmatota</taxon>
        <taxon>Mycoplasmoidales</taxon>
        <taxon>Mycoplasmoidaceae</taxon>
        <taxon>Mycoplasmoides</taxon>
    </lineage>
</organism>
<comment type="sequence caution" evidence="2">
    <conflict type="erroneous initiation">
        <sequence resource="EMBL-CDS" id="AAD12510"/>
    </conflict>
</comment>
<keyword id="KW-1185">Reference proteome</keyword>